<accession>A6W7Z2</accession>
<organism>
    <name type="scientific">Kineococcus radiotolerans (strain ATCC BAA-149 / DSM 14245 / SRS30216)</name>
    <dbReference type="NCBI Taxonomy" id="266940"/>
    <lineage>
        <taxon>Bacteria</taxon>
        <taxon>Bacillati</taxon>
        <taxon>Actinomycetota</taxon>
        <taxon>Actinomycetes</taxon>
        <taxon>Kineosporiales</taxon>
        <taxon>Kineosporiaceae</taxon>
        <taxon>Kineococcus</taxon>
    </lineage>
</organism>
<gene>
    <name evidence="2" type="primary">infB</name>
    <name type="ordered locus">Krad_1443</name>
</gene>
<name>IF2_KINRD</name>
<feature type="chain" id="PRO_0000335480" description="Translation initiation factor IF-2">
    <location>
        <begin position="1"/>
        <end position="1044"/>
    </location>
</feature>
<feature type="domain" description="tr-type G">
    <location>
        <begin position="537"/>
        <end position="709"/>
    </location>
</feature>
<feature type="region of interest" description="Disordered" evidence="3">
    <location>
        <begin position="31"/>
        <end position="425"/>
    </location>
</feature>
<feature type="region of interest" description="G1" evidence="1">
    <location>
        <begin position="546"/>
        <end position="553"/>
    </location>
</feature>
<feature type="region of interest" description="G2" evidence="1">
    <location>
        <begin position="571"/>
        <end position="575"/>
    </location>
</feature>
<feature type="region of interest" description="G3" evidence="1">
    <location>
        <begin position="596"/>
        <end position="599"/>
    </location>
</feature>
<feature type="region of interest" description="G4" evidence="1">
    <location>
        <begin position="650"/>
        <end position="653"/>
    </location>
</feature>
<feature type="region of interest" description="G5" evidence="1">
    <location>
        <begin position="686"/>
        <end position="688"/>
    </location>
</feature>
<feature type="compositionally biased region" description="Pro residues" evidence="3">
    <location>
        <begin position="77"/>
        <end position="98"/>
    </location>
</feature>
<feature type="compositionally biased region" description="Pro residues" evidence="3">
    <location>
        <begin position="106"/>
        <end position="116"/>
    </location>
</feature>
<feature type="compositionally biased region" description="Low complexity" evidence="3">
    <location>
        <begin position="117"/>
        <end position="148"/>
    </location>
</feature>
<feature type="compositionally biased region" description="Gly residues" evidence="3">
    <location>
        <begin position="168"/>
        <end position="185"/>
    </location>
</feature>
<feature type="compositionally biased region" description="Basic and acidic residues" evidence="3">
    <location>
        <begin position="204"/>
        <end position="247"/>
    </location>
</feature>
<feature type="compositionally biased region" description="Low complexity" evidence="3">
    <location>
        <begin position="285"/>
        <end position="304"/>
    </location>
</feature>
<feature type="compositionally biased region" description="Pro residues" evidence="3">
    <location>
        <begin position="305"/>
        <end position="328"/>
    </location>
</feature>
<feature type="compositionally biased region" description="Low complexity" evidence="3">
    <location>
        <begin position="329"/>
        <end position="338"/>
    </location>
</feature>
<feature type="compositionally biased region" description="Gly residues" evidence="3">
    <location>
        <begin position="339"/>
        <end position="409"/>
    </location>
</feature>
<feature type="compositionally biased region" description="Basic residues" evidence="3">
    <location>
        <begin position="413"/>
        <end position="422"/>
    </location>
</feature>
<feature type="binding site" evidence="2">
    <location>
        <begin position="546"/>
        <end position="553"/>
    </location>
    <ligand>
        <name>GTP</name>
        <dbReference type="ChEBI" id="CHEBI:37565"/>
    </ligand>
</feature>
<feature type="binding site" evidence="2">
    <location>
        <begin position="596"/>
        <end position="600"/>
    </location>
    <ligand>
        <name>GTP</name>
        <dbReference type="ChEBI" id="CHEBI:37565"/>
    </ligand>
</feature>
<feature type="binding site" evidence="2">
    <location>
        <begin position="650"/>
        <end position="653"/>
    </location>
    <ligand>
        <name>GTP</name>
        <dbReference type="ChEBI" id="CHEBI:37565"/>
    </ligand>
</feature>
<comment type="function">
    <text evidence="2">One of the essential components for the initiation of protein synthesis. Protects formylmethionyl-tRNA from spontaneous hydrolysis and promotes its binding to the 30S ribosomal subunits. Also involved in the hydrolysis of GTP during the formation of the 70S ribosomal complex.</text>
</comment>
<comment type="subcellular location">
    <subcellularLocation>
        <location evidence="2">Cytoplasm</location>
    </subcellularLocation>
</comment>
<comment type="similarity">
    <text evidence="2">Belongs to the TRAFAC class translation factor GTPase superfamily. Classic translation factor GTPase family. IF-2 subfamily.</text>
</comment>
<keyword id="KW-0963">Cytoplasm</keyword>
<keyword id="KW-0342">GTP-binding</keyword>
<keyword id="KW-0396">Initiation factor</keyword>
<keyword id="KW-0547">Nucleotide-binding</keyword>
<keyword id="KW-0648">Protein biosynthesis</keyword>
<keyword id="KW-1185">Reference proteome</keyword>
<reference key="1">
    <citation type="journal article" date="2008" name="PLoS ONE">
        <title>Survival in nuclear waste, extreme resistance, and potential applications gleaned from the genome sequence of Kineococcus radiotolerans SRS30216.</title>
        <authorList>
            <person name="Bagwell C.E."/>
            <person name="Bhat S."/>
            <person name="Hawkins G.M."/>
            <person name="Smith B.W."/>
            <person name="Biswas T."/>
            <person name="Hoover T.R."/>
            <person name="Saunders E."/>
            <person name="Han C.S."/>
            <person name="Tsodikov O.V."/>
            <person name="Shimkets L.J."/>
        </authorList>
    </citation>
    <scope>NUCLEOTIDE SEQUENCE [LARGE SCALE GENOMIC DNA]</scope>
    <source>
        <strain>ATCC BAA-149 / DSM 14245 / SRS30216</strain>
    </source>
</reference>
<evidence type="ECO:0000250" key="1"/>
<evidence type="ECO:0000255" key="2">
    <source>
        <dbReference type="HAMAP-Rule" id="MF_00100"/>
    </source>
</evidence>
<evidence type="ECO:0000256" key="3">
    <source>
        <dbReference type="SAM" id="MobiDB-lite"/>
    </source>
</evidence>
<sequence length="1044" mass="107925">MAKVRVYELAKEFGVESKVVLATLKEMGEFVRSASSTVEPPVIRRLKDKFPTEGGAASRPAPAVKPGPRLPQGARPGPAPAARPQAPAPAQPAPPQPAPAAASTPAPAPAPAPRPAEPAANPAPAAPPAFQAPAPAPAERPAAAQRPAAPAPQRPAPAGRPSTPPVSGGPGQGPRPGARPGGPGAPGARPGAPGAGGPGARRPGPGDRPERSERPDRGDRPQGDRPRSDRPQGERQQGDRPQGDRPGRPGAPGGAPRPGAGAPRPGNNPFAPSQGMPRSQGDRPGGAPRPGNNPFASNQGMPRPQGGPRPTPAGPGGPRPGGPRPNPGMMPARPTVGRPGAGPGAGRPGAPGRGGPGGARGGAGGGFAGRPGGPSAGGGGGGFAGRPGGGGGGPRGNRGGTQGAFGRAGGRPVRGRKSKRAKRQEYEAMQAPAVGGVSVRHGDGTTVLRIRRGASLSDFAERIDADPAALVTILFHLGEMATATQSLDEDTFQLLGGELGYVIEVVSPEDEERELLAGFSIDLDAELEAEGDDDLSARPPVVTVMGHVDHGKTKLLDAIRSSDVVAKEAGGITQHIGAYQVVKEHEGIERPITFIDTPGHEAFTAMRARGAKVTDIAILVVAADDGVMPQTIEALNHAQAADVPIVVAVNKVDKEGANPDKVRQQLTEYNLVAEEYGGDTMFVDVSARQGTGLDSLLEAVLLTADASLDLRANSDKDARGIAIEGNLDKGRGPVATVLVQSGTLHVGDAIVAGTGYGRVRAMLDENGDAVQEATPSRPVQVLGLTSVPGAGDTFLVAPDDRTARQIAEKREAQERNAALAKARKRITLEDFTKALQQGKVETLNLILKGDGAGSVEALEDALFKIDVGDEVELRVIDRGVGAVTKNNVNLAVASNAIIIGFNVRPEQQTKEYADREGVDIRFYSVIYAAIEDVEASLKGLLKPEFEEVQLGTAEVREIFRSSKFGNIAGTLVRSGLIRRNSKARVLRRGVVHGDNLTIESLRRFKDDATEVREGYECGIGLGSYNDLQVDDVIETYEMQEKPRG</sequence>
<dbReference type="EMBL" id="CP000750">
    <property type="protein sequence ID" value="ABS02931.1"/>
    <property type="molecule type" value="Genomic_DNA"/>
</dbReference>
<dbReference type="SMR" id="A6W7Z2"/>
<dbReference type="STRING" id="266940.Krad_1443"/>
<dbReference type="KEGG" id="kra:Krad_1443"/>
<dbReference type="eggNOG" id="COG0532">
    <property type="taxonomic scope" value="Bacteria"/>
</dbReference>
<dbReference type="HOGENOM" id="CLU_006301_9_1_11"/>
<dbReference type="OrthoDB" id="9811804at2"/>
<dbReference type="Proteomes" id="UP000001116">
    <property type="component" value="Chromosome"/>
</dbReference>
<dbReference type="GO" id="GO:0005829">
    <property type="term" value="C:cytosol"/>
    <property type="evidence" value="ECO:0007669"/>
    <property type="project" value="TreeGrafter"/>
</dbReference>
<dbReference type="GO" id="GO:0005525">
    <property type="term" value="F:GTP binding"/>
    <property type="evidence" value="ECO:0007669"/>
    <property type="project" value="UniProtKB-KW"/>
</dbReference>
<dbReference type="GO" id="GO:0003924">
    <property type="term" value="F:GTPase activity"/>
    <property type="evidence" value="ECO:0007669"/>
    <property type="project" value="UniProtKB-UniRule"/>
</dbReference>
<dbReference type="GO" id="GO:0003743">
    <property type="term" value="F:translation initiation factor activity"/>
    <property type="evidence" value="ECO:0007669"/>
    <property type="project" value="UniProtKB-UniRule"/>
</dbReference>
<dbReference type="CDD" id="cd01887">
    <property type="entry name" value="IF2_eIF5B"/>
    <property type="match status" value="1"/>
</dbReference>
<dbReference type="CDD" id="cd03702">
    <property type="entry name" value="IF2_mtIF2_II"/>
    <property type="match status" value="1"/>
</dbReference>
<dbReference type="CDD" id="cd03692">
    <property type="entry name" value="mtIF2_IVc"/>
    <property type="match status" value="1"/>
</dbReference>
<dbReference type="FunFam" id="2.40.30.10:FF:000007">
    <property type="entry name" value="Translation initiation factor IF-2"/>
    <property type="match status" value="1"/>
</dbReference>
<dbReference type="FunFam" id="2.40.30.10:FF:000008">
    <property type="entry name" value="Translation initiation factor IF-2"/>
    <property type="match status" value="1"/>
</dbReference>
<dbReference type="FunFam" id="3.40.50.10050:FF:000001">
    <property type="entry name" value="Translation initiation factor IF-2"/>
    <property type="match status" value="1"/>
</dbReference>
<dbReference type="FunFam" id="3.40.50.300:FF:000019">
    <property type="entry name" value="Translation initiation factor IF-2"/>
    <property type="match status" value="1"/>
</dbReference>
<dbReference type="Gene3D" id="1.10.10.2480">
    <property type="match status" value="1"/>
</dbReference>
<dbReference type="Gene3D" id="3.40.50.300">
    <property type="entry name" value="P-loop containing nucleotide triphosphate hydrolases"/>
    <property type="match status" value="1"/>
</dbReference>
<dbReference type="Gene3D" id="2.40.30.10">
    <property type="entry name" value="Translation factors"/>
    <property type="match status" value="2"/>
</dbReference>
<dbReference type="Gene3D" id="3.40.50.10050">
    <property type="entry name" value="Translation initiation factor IF- 2, domain 3"/>
    <property type="match status" value="1"/>
</dbReference>
<dbReference type="HAMAP" id="MF_00100_B">
    <property type="entry name" value="IF_2_B"/>
    <property type="match status" value="1"/>
</dbReference>
<dbReference type="InterPro" id="IPR053905">
    <property type="entry name" value="EF-G-like_DII"/>
</dbReference>
<dbReference type="InterPro" id="IPR044145">
    <property type="entry name" value="IF2_II"/>
</dbReference>
<dbReference type="InterPro" id="IPR006847">
    <property type="entry name" value="IF2_N"/>
</dbReference>
<dbReference type="InterPro" id="IPR027417">
    <property type="entry name" value="P-loop_NTPase"/>
</dbReference>
<dbReference type="InterPro" id="IPR005225">
    <property type="entry name" value="Small_GTP-bd"/>
</dbReference>
<dbReference type="InterPro" id="IPR000795">
    <property type="entry name" value="T_Tr_GTP-bd_dom"/>
</dbReference>
<dbReference type="InterPro" id="IPR000178">
    <property type="entry name" value="TF_IF2_bacterial-like"/>
</dbReference>
<dbReference type="InterPro" id="IPR015760">
    <property type="entry name" value="TIF_IF2"/>
</dbReference>
<dbReference type="InterPro" id="IPR023115">
    <property type="entry name" value="TIF_IF2_dom3"/>
</dbReference>
<dbReference type="InterPro" id="IPR036925">
    <property type="entry name" value="TIF_IF2_dom3_sf"/>
</dbReference>
<dbReference type="InterPro" id="IPR009000">
    <property type="entry name" value="Transl_B-barrel_sf"/>
</dbReference>
<dbReference type="NCBIfam" id="TIGR00487">
    <property type="entry name" value="IF-2"/>
    <property type="match status" value="1"/>
</dbReference>
<dbReference type="NCBIfam" id="TIGR00231">
    <property type="entry name" value="small_GTP"/>
    <property type="match status" value="1"/>
</dbReference>
<dbReference type="PANTHER" id="PTHR43381:SF5">
    <property type="entry name" value="TR-TYPE G DOMAIN-CONTAINING PROTEIN"/>
    <property type="match status" value="1"/>
</dbReference>
<dbReference type="PANTHER" id="PTHR43381">
    <property type="entry name" value="TRANSLATION INITIATION FACTOR IF-2-RELATED"/>
    <property type="match status" value="1"/>
</dbReference>
<dbReference type="Pfam" id="PF22042">
    <property type="entry name" value="EF-G_D2"/>
    <property type="match status" value="1"/>
</dbReference>
<dbReference type="Pfam" id="PF00009">
    <property type="entry name" value="GTP_EFTU"/>
    <property type="match status" value="1"/>
</dbReference>
<dbReference type="Pfam" id="PF11987">
    <property type="entry name" value="IF-2"/>
    <property type="match status" value="1"/>
</dbReference>
<dbReference type="Pfam" id="PF04760">
    <property type="entry name" value="IF2_N"/>
    <property type="match status" value="2"/>
</dbReference>
<dbReference type="PRINTS" id="PR00315">
    <property type="entry name" value="ELONGATNFCT"/>
</dbReference>
<dbReference type="SUPFAM" id="SSF52156">
    <property type="entry name" value="Initiation factor IF2/eIF5b, domain 3"/>
    <property type="match status" value="1"/>
</dbReference>
<dbReference type="SUPFAM" id="SSF52540">
    <property type="entry name" value="P-loop containing nucleoside triphosphate hydrolases"/>
    <property type="match status" value="1"/>
</dbReference>
<dbReference type="SUPFAM" id="SSF50447">
    <property type="entry name" value="Translation proteins"/>
    <property type="match status" value="2"/>
</dbReference>
<dbReference type="PROSITE" id="PS51722">
    <property type="entry name" value="G_TR_2"/>
    <property type="match status" value="1"/>
</dbReference>
<dbReference type="PROSITE" id="PS01176">
    <property type="entry name" value="IF2"/>
    <property type="match status" value="1"/>
</dbReference>
<proteinExistence type="inferred from homology"/>
<protein>
    <recommendedName>
        <fullName evidence="2">Translation initiation factor IF-2</fullName>
    </recommendedName>
</protein>